<feature type="chain" id="PRO_0000325228" description="Lipoyl synthase">
    <location>
        <begin position="1"/>
        <end position="295"/>
    </location>
</feature>
<feature type="domain" description="Radical SAM core" evidence="2">
    <location>
        <begin position="46"/>
        <end position="262"/>
    </location>
</feature>
<feature type="binding site" evidence="1">
    <location>
        <position position="34"/>
    </location>
    <ligand>
        <name>[4Fe-4S] cluster</name>
        <dbReference type="ChEBI" id="CHEBI:49883"/>
        <label>1</label>
    </ligand>
</feature>
<feature type="binding site" evidence="1">
    <location>
        <position position="39"/>
    </location>
    <ligand>
        <name>[4Fe-4S] cluster</name>
        <dbReference type="ChEBI" id="CHEBI:49883"/>
        <label>1</label>
    </ligand>
</feature>
<feature type="binding site" evidence="1">
    <location>
        <position position="45"/>
    </location>
    <ligand>
        <name>[4Fe-4S] cluster</name>
        <dbReference type="ChEBI" id="CHEBI:49883"/>
        <label>1</label>
    </ligand>
</feature>
<feature type="binding site" evidence="1">
    <location>
        <position position="60"/>
    </location>
    <ligand>
        <name>[4Fe-4S] cluster</name>
        <dbReference type="ChEBI" id="CHEBI:49883"/>
        <label>2</label>
        <note>4Fe-4S-S-AdoMet</note>
    </ligand>
</feature>
<feature type="binding site" evidence="1">
    <location>
        <position position="64"/>
    </location>
    <ligand>
        <name>[4Fe-4S] cluster</name>
        <dbReference type="ChEBI" id="CHEBI:49883"/>
        <label>2</label>
        <note>4Fe-4S-S-AdoMet</note>
    </ligand>
</feature>
<feature type="binding site" evidence="1">
    <location>
        <position position="67"/>
    </location>
    <ligand>
        <name>[4Fe-4S] cluster</name>
        <dbReference type="ChEBI" id="CHEBI:49883"/>
        <label>2</label>
        <note>4Fe-4S-S-AdoMet</note>
    </ligand>
</feature>
<feature type="binding site" evidence="1">
    <location>
        <position position="273"/>
    </location>
    <ligand>
        <name>[4Fe-4S] cluster</name>
        <dbReference type="ChEBI" id="CHEBI:49883"/>
        <label>1</label>
    </ligand>
</feature>
<gene>
    <name evidence="1" type="primary">lipA</name>
    <name type="ordered locus">AM820</name>
</gene>
<keyword id="KW-0004">4Fe-4S</keyword>
<keyword id="KW-0963">Cytoplasm</keyword>
<keyword id="KW-0408">Iron</keyword>
<keyword id="KW-0411">Iron-sulfur</keyword>
<keyword id="KW-0479">Metal-binding</keyword>
<keyword id="KW-0949">S-adenosyl-L-methionine</keyword>
<keyword id="KW-0808">Transferase</keyword>
<protein>
    <recommendedName>
        <fullName evidence="1">Lipoyl synthase</fullName>
        <ecNumber evidence="1">2.8.1.8</ecNumber>
    </recommendedName>
    <alternativeName>
        <fullName evidence="1">Lip-syn</fullName>
        <shortName evidence="1">LS</shortName>
    </alternativeName>
    <alternativeName>
        <fullName evidence="1">Lipoate synthase</fullName>
    </alternativeName>
    <alternativeName>
        <fullName evidence="1">Lipoic acid synthase</fullName>
    </alternativeName>
    <alternativeName>
        <fullName evidence="1">Sulfur insertion protein LipA</fullName>
    </alternativeName>
</protein>
<organism>
    <name type="scientific">Anaplasma marginale (strain St. Maries)</name>
    <dbReference type="NCBI Taxonomy" id="234826"/>
    <lineage>
        <taxon>Bacteria</taxon>
        <taxon>Pseudomonadati</taxon>
        <taxon>Pseudomonadota</taxon>
        <taxon>Alphaproteobacteria</taxon>
        <taxon>Rickettsiales</taxon>
        <taxon>Anaplasmataceae</taxon>
        <taxon>Anaplasma</taxon>
    </lineage>
</organism>
<proteinExistence type="inferred from homology"/>
<name>LIPA_ANAMM</name>
<sequence>MENKPDWLRVRMPGGAVFDEVTELVRRYELNTVCEEAACPNIGECWNKRHATIMIMGSVCTRACAFCNVKVGVPNALDPDEPERVGAAISKLGLKHVVITSVDRDDLPDGGASHFAKCVREIRKRDSSVTVEILTPDFLGKPCAIDIIASARPDVYNHNLETVPRLYSRVRPRAKYFNSLNLLKEVKDKSPGVFTKSGFMLGLGESKEEVYQVMDDLRCAGVDFIVMGQYLQPTKNNIEVHRYVPPSEFEQYKLMAYAKGFSMVAASPLARSSYHAEDDFRKLKELRFARAKVNE</sequence>
<comment type="function">
    <text evidence="1">Catalyzes the radical-mediated insertion of two sulfur atoms into the C-6 and C-8 positions of the octanoyl moiety bound to the lipoyl domains of lipoate-dependent enzymes, thereby converting the octanoylated domains into lipoylated derivatives.</text>
</comment>
<comment type="catalytic activity">
    <reaction evidence="1">
        <text>[[Fe-S] cluster scaffold protein carrying a second [4Fe-4S](2+) cluster] + N(6)-octanoyl-L-lysyl-[protein] + 2 oxidized [2Fe-2S]-[ferredoxin] + 2 S-adenosyl-L-methionine + 4 H(+) = [[Fe-S] cluster scaffold protein] + N(6)-[(R)-dihydrolipoyl]-L-lysyl-[protein] + 4 Fe(3+) + 2 hydrogen sulfide + 2 5'-deoxyadenosine + 2 L-methionine + 2 reduced [2Fe-2S]-[ferredoxin]</text>
        <dbReference type="Rhea" id="RHEA:16585"/>
        <dbReference type="Rhea" id="RHEA-COMP:9928"/>
        <dbReference type="Rhea" id="RHEA-COMP:10000"/>
        <dbReference type="Rhea" id="RHEA-COMP:10001"/>
        <dbReference type="Rhea" id="RHEA-COMP:10475"/>
        <dbReference type="Rhea" id="RHEA-COMP:14568"/>
        <dbReference type="Rhea" id="RHEA-COMP:14569"/>
        <dbReference type="ChEBI" id="CHEBI:15378"/>
        <dbReference type="ChEBI" id="CHEBI:17319"/>
        <dbReference type="ChEBI" id="CHEBI:29034"/>
        <dbReference type="ChEBI" id="CHEBI:29919"/>
        <dbReference type="ChEBI" id="CHEBI:33722"/>
        <dbReference type="ChEBI" id="CHEBI:33737"/>
        <dbReference type="ChEBI" id="CHEBI:33738"/>
        <dbReference type="ChEBI" id="CHEBI:57844"/>
        <dbReference type="ChEBI" id="CHEBI:59789"/>
        <dbReference type="ChEBI" id="CHEBI:78809"/>
        <dbReference type="ChEBI" id="CHEBI:83100"/>
        <dbReference type="EC" id="2.8.1.8"/>
    </reaction>
</comment>
<comment type="cofactor">
    <cofactor evidence="1">
        <name>[4Fe-4S] cluster</name>
        <dbReference type="ChEBI" id="CHEBI:49883"/>
    </cofactor>
    <text evidence="1">Binds 2 [4Fe-4S] clusters per subunit. One cluster is coordinated with 3 cysteines and an exchangeable S-adenosyl-L-methionine.</text>
</comment>
<comment type="pathway">
    <text evidence="1">Protein modification; protein lipoylation via endogenous pathway; protein N(6)-(lipoyl)lysine from octanoyl-[acyl-carrier-protein]: step 2/2.</text>
</comment>
<comment type="subcellular location">
    <subcellularLocation>
        <location evidence="1">Cytoplasm</location>
    </subcellularLocation>
</comment>
<comment type="similarity">
    <text evidence="1">Belongs to the radical SAM superfamily. Lipoyl synthase family.</text>
</comment>
<comment type="sequence caution" evidence="3">
    <conflict type="erroneous initiation">
        <sequence resource="EMBL-CDS" id="AAV86746"/>
    </conflict>
</comment>
<dbReference type="EC" id="2.8.1.8" evidence="1"/>
<dbReference type="EMBL" id="CP000030">
    <property type="protein sequence ID" value="AAV86746.1"/>
    <property type="status" value="ALT_INIT"/>
    <property type="molecule type" value="Genomic_DNA"/>
</dbReference>
<dbReference type="RefSeq" id="WP_029209728.1">
    <property type="nucleotide sequence ID" value="NZ_AFMU01000051.1"/>
</dbReference>
<dbReference type="SMR" id="Q5PAD4"/>
<dbReference type="GeneID" id="7398251"/>
<dbReference type="KEGG" id="ama:AM820"/>
<dbReference type="PATRIC" id="fig|320483.3.peg.703"/>
<dbReference type="HOGENOM" id="CLU_033144_2_1_5"/>
<dbReference type="UniPathway" id="UPA00538">
    <property type="reaction ID" value="UER00593"/>
</dbReference>
<dbReference type="GO" id="GO:0005737">
    <property type="term" value="C:cytoplasm"/>
    <property type="evidence" value="ECO:0007669"/>
    <property type="project" value="UniProtKB-SubCell"/>
</dbReference>
<dbReference type="GO" id="GO:0051539">
    <property type="term" value="F:4 iron, 4 sulfur cluster binding"/>
    <property type="evidence" value="ECO:0007669"/>
    <property type="project" value="UniProtKB-UniRule"/>
</dbReference>
<dbReference type="GO" id="GO:0016992">
    <property type="term" value="F:lipoate synthase activity"/>
    <property type="evidence" value="ECO:0007669"/>
    <property type="project" value="UniProtKB-UniRule"/>
</dbReference>
<dbReference type="GO" id="GO:0046872">
    <property type="term" value="F:metal ion binding"/>
    <property type="evidence" value="ECO:0007669"/>
    <property type="project" value="UniProtKB-KW"/>
</dbReference>
<dbReference type="CDD" id="cd01335">
    <property type="entry name" value="Radical_SAM"/>
    <property type="match status" value="1"/>
</dbReference>
<dbReference type="FunFam" id="3.20.20.70:FF:000040">
    <property type="entry name" value="Lipoyl synthase"/>
    <property type="match status" value="1"/>
</dbReference>
<dbReference type="Gene3D" id="3.20.20.70">
    <property type="entry name" value="Aldolase class I"/>
    <property type="match status" value="1"/>
</dbReference>
<dbReference type="HAMAP" id="MF_00206">
    <property type="entry name" value="Lipoyl_synth"/>
    <property type="match status" value="1"/>
</dbReference>
<dbReference type="InterPro" id="IPR013785">
    <property type="entry name" value="Aldolase_TIM"/>
</dbReference>
<dbReference type="InterPro" id="IPR006638">
    <property type="entry name" value="Elp3/MiaA/NifB-like_rSAM"/>
</dbReference>
<dbReference type="InterPro" id="IPR003698">
    <property type="entry name" value="Lipoyl_synth"/>
</dbReference>
<dbReference type="InterPro" id="IPR007197">
    <property type="entry name" value="rSAM"/>
</dbReference>
<dbReference type="NCBIfam" id="TIGR00510">
    <property type="entry name" value="lipA"/>
    <property type="match status" value="1"/>
</dbReference>
<dbReference type="NCBIfam" id="NF004019">
    <property type="entry name" value="PRK05481.1"/>
    <property type="match status" value="1"/>
</dbReference>
<dbReference type="NCBIfam" id="NF009544">
    <property type="entry name" value="PRK12928.1"/>
    <property type="match status" value="1"/>
</dbReference>
<dbReference type="PANTHER" id="PTHR10949">
    <property type="entry name" value="LIPOYL SYNTHASE"/>
    <property type="match status" value="1"/>
</dbReference>
<dbReference type="PANTHER" id="PTHR10949:SF0">
    <property type="entry name" value="LIPOYL SYNTHASE, MITOCHONDRIAL"/>
    <property type="match status" value="1"/>
</dbReference>
<dbReference type="Pfam" id="PF04055">
    <property type="entry name" value="Radical_SAM"/>
    <property type="match status" value="1"/>
</dbReference>
<dbReference type="PIRSF" id="PIRSF005963">
    <property type="entry name" value="Lipoyl_synth"/>
    <property type="match status" value="1"/>
</dbReference>
<dbReference type="SFLD" id="SFLDF00271">
    <property type="entry name" value="lipoyl_synthase"/>
    <property type="match status" value="1"/>
</dbReference>
<dbReference type="SFLD" id="SFLDG01058">
    <property type="entry name" value="lipoyl_synthase_like"/>
    <property type="match status" value="1"/>
</dbReference>
<dbReference type="SMART" id="SM00729">
    <property type="entry name" value="Elp3"/>
    <property type="match status" value="1"/>
</dbReference>
<dbReference type="SUPFAM" id="SSF102114">
    <property type="entry name" value="Radical SAM enzymes"/>
    <property type="match status" value="1"/>
</dbReference>
<dbReference type="PROSITE" id="PS51918">
    <property type="entry name" value="RADICAL_SAM"/>
    <property type="match status" value="1"/>
</dbReference>
<accession>Q5PAD4</accession>
<evidence type="ECO:0000255" key="1">
    <source>
        <dbReference type="HAMAP-Rule" id="MF_00206"/>
    </source>
</evidence>
<evidence type="ECO:0000255" key="2">
    <source>
        <dbReference type="PROSITE-ProRule" id="PRU01266"/>
    </source>
</evidence>
<evidence type="ECO:0000305" key="3"/>
<reference key="1">
    <citation type="journal article" date="2005" name="Proc. Natl. Acad. Sci. U.S.A.">
        <title>Complete genome sequencing of Anaplasma marginale reveals that the surface is skewed to two superfamilies of outer membrane proteins.</title>
        <authorList>
            <person name="Brayton K.A."/>
            <person name="Kappmeyer L.S."/>
            <person name="Herndon D.R."/>
            <person name="Dark M.J."/>
            <person name="Tibbals D.L."/>
            <person name="Palmer G.H."/>
            <person name="McGuire T.C."/>
            <person name="Knowles D.P. Jr."/>
        </authorList>
    </citation>
    <scope>NUCLEOTIDE SEQUENCE [LARGE SCALE GENOMIC DNA]</scope>
    <source>
        <strain>St. Maries</strain>
    </source>
</reference>